<reference key="1">
    <citation type="journal article" date="1998" name="Biochem. J.">
        <title>Plant mitochondrial pyruvate dehydrogenase complex: purification and identification of catalytic components in potato.</title>
        <authorList>
            <person name="Millar A.H."/>
            <person name="Knorpp C."/>
            <person name="Leaver C.J."/>
            <person name="Hill S.A."/>
        </authorList>
    </citation>
    <scope>PROTEIN SEQUENCE</scope>
    <source>
        <strain>cv. Romano</strain>
        <tissue>Tuber</tissue>
    </source>
</reference>
<organism>
    <name type="scientific">Solanum tuberosum</name>
    <name type="common">Potato</name>
    <dbReference type="NCBI Taxonomy" id="4113"/>
    <lineage>
        <taxon>Eukaryota</taxon>
        <taxon>Viridiplantae</taxon>
        <taxon>Streptophyta</taxon>
        <taxon>Embryophyta</taxon>
        <taxon>Tracheophyta</taxon>
        <taxon>Spermatophyta</taxon>
        <taxon>Magnoliopsida</taxon>
        <taxon>eudicotyledons</taxon>
        <taxon>Gunneridae</taxon>
        <taxon>Pentapetalae</taxon>
        <taxon>asterids</taxon>
        <taxon>lamiids</taxon>
        <taxon>Solanales</taxon>
        <taxon>Solanaceae</taxon>
        <taxon>Solanoideae</taxon>
        <taxon>Solaneae</taxon>
        <taxon>Solanum</taxon>
    </lineage>
</organism>
<comment type="function">
    <text>The pyruvate dehydrogenase complex catalyzes the overall conversion of pyruvate to acetyl-CoA and CO(2). It contains multiple copies of three enzymatic components: pyruvate dehydrogenase (E1), dihydrolipoamide acetyltransferase (E2) and lipoamide dehydrogenase (E3).</text>
</comment>
<comment type="catalytic activity">
    <reaction>
        <text>N(6)-[(R)-dihydrolipoyl]-L-lysyl-[protein] + acetyl-CoA = N(6)-[(R)-S(8)-acetyldihydrolipoyl]-L-lysyl-[protein] + CoA</text>
        <dbReference type="Rhea" id="RHEA:17017"/>
        <dbReference type="Rhea" id="RHEA-COMP:10475"/>
        <dbReference type="Rhea" id="RHEA-COMP:10478"/>
        <dbReference type="ChEBI" id="CHEBI:57287"/>
        <dbReference type="ChEBI" id="CHEBI:57288"/>
        <dbReference type="ChEBI" id="CHEBI:83100"/>
        <dbReference type="ChEBI" id="CHEBI:83111"/>
        <dbReference type="EC" id="2.3.1.12"/>
    </reaction>
</comment>
<comment type="cofactor">
    <cofactor evidence="1">
        <name>(R)-lipoate</name>
        <dbReference type="ChEBI" id="CHEBI:83088"/>
    </cofactor>
    <text evidence="1">Binds 1 lipoyl cofactor covalently.</text>
</comment>
<comment type="subunit">
    <text evidence="1">Forms a 60-polypeptide structural core.</text>
</comment>
<comment type="subcellular location">
    <subcellularLocation>
        <location>Mitochondrion matrix</location>
    </subcellularLocation>
</comment>
<protein>
    <recommendedName>
        <fullName>55 kDa dihydrolipoyllysine-residue acetyltransferase component of pyruvate dehydrogenase complex</fullName>
        <ecNumber>2.3.1.12</ecNumber>
    </recommendedName>
    <alternativeName>
        <fullName>55 kDa dihydrolipoamide acetyltransferase component of pyruvate dehydrogenase complex</fullName>
    </alternativeName>
    <alternativeName>
        <fullName>Pyruvate dehydrogenase complex component E2 2</fullName>
        <shortName>PDC-E2 2</shortName>
        <shortName>PDCE2 2</shortName>
    </alternativeName>
</protein>
<keyword id="KW-0012">Acyltransferase</keyword>
<keyword id="KW-0903">Direct protein sequencing</keyword>
<keyword id="KW-0450">Lipoyl</keyword>
<keyword id="KW-0496">Mitochondrion</keyword>
<keyword id="KW-1185">Reference proteome</keyword>
<keyword id="KW-0808">Transferase</keyword>
<sequence length="15" mass="1449">SSADSLPXHGAGXMP</sequence>
<proteinExistence type="evidence at protein level"/>
<dbReference type="EC" id="2.3.1.12"/>
<dbReference type="InParanoid" id="P81420"/>
<dbReference type="SABIO-RK" id="P81420"/>
<dbReference type="Proteomes" id="UP000011115">
    <property type="component" value="Unassembled WGS sequence"/>
</dbReference>
<dbReference type="GO" id="GO:0005759">
    <property type="term" value="C:mitochondrial matrix"/>
    <property type="evidence" value="ECO:0007669"/>
    <property type="project" value="UniProtKB-SubCell"/>
</dbReference>
<dbReference type="GO" id="GO:0004742">
    <property type="term" value="F:dihydrolipoyllysine-residue acetyltransferase activity"/>
    <property type="evidence" value="ECO:0007669"/>
    <property type="project" value="UniProtKB-EC"/>
</dbReference>
<evidence type="ECO:0000250" key="1"/>
<accession>P81420</accession>
<feature type="chain" id="PRO_0000162300" description="55 kDa dihydrolipoyllysine-residue acetyltransferase component of pyruvate dehydrogenase complex">
    <location>
        <begin position="1"/>
        <end position="15" status="greater than"/>
    </location>
</feature>
<feature type="non-terminal residue">
    <location>
        <position position="15"/>
    </location>
</feature>
<name>ODP3_SOLTU</name>